<keyword id="KW-0963">Cytoplasm</keyword>
<keyword id="KW-0444">Lipid biosynthesis</keyword>
<keyword id="KW-0443">Lipid metabolism</keyword>
<keyword id="KW-0594">Phospholipid biosynthesis</keyword>
<keyword id="KW-1208">Phospholipid metabolism</keyword>
<keyword id="KW-0808">Transferase</keyword>
<reference key="1">
    <citation type="submission" date="2008-05" db="EMBL/GenBank/DDBJ databases">
        <title>Complete genome sequence of Clostridium botulinum E3 str. Alaska E43.</title>
        <authorList>
            <person name="Brinkac L.M."/>
            <person name="Brown J.L."/>
            <person name="Bruce D."/>
            <person name="Detter C."/>
            <person name="Munk C."/>
            <person name="Smith L.A."/>
            <person name="Smith T.J."/>
            <person name="Sutton G."/>
            <person name="Brettin T.S."/>
        </authorList>
    </citation>
    <scope>NUCLEOTIDE SEQUENCE [LARGE SCALE GENOMIC DNA]</scope>
    <source>
        <strain>Alaska E43 / Type E3</strain>
    </source>
</reference>
<dbReference type="EC" id="2.3.1.274" evidence="1"/>
<dbReference type="EMBL" id="CP001078">
    <property type="protein sequence ID" value="ACD54099.1"/>
    <property type="molecule type" value="Genomic_DNA"/>
</dbReference>
<dbReference type="RefSeq" id="WP_012451860.1">
    <property type="nucleotide sequence ID" value="NC_010723.1"/>
</dbReference>
<dbReference type="SMR" id="B2V4D4"/>
<dbReference type="KEGG" id="cbt:CLH_1189"/>
<dbReference type="HOGENOM" id="CLU_039379_1_1_9"/>
<dbReference type="UniPathway" id="UPA00085"/>
<dbReference type="GO" id="GO:0005737">
    <property type="term" value="C:cytoplasm"/>
    <property type="evidence" value="ECO:0007669"/>
    <property type="project" value="UniProtKB-SubCell"/>
</dbReference>
<dbReference type="GO" id="GO:0043811">
    <property type="term" value="F:phosphate:acyl-[acyl carrier protein] acyltransferase activity"/>
    <property type="evidence" value="ECO:0007669"/>
    <property type="project" value="UniProtKB-UniRule"/>
</dbReference>
<dbReference type="GO" id="GO:0006633">
    <property type="term" value="P:fatty acid biosynthetic process"/>
    <property type="evidence" value="ECO:0007669"/>
    <property type="project" value="UniProtKB-UniRule"/>
</dbReference>
<dbReference type="GO" id="GO:0008654">
    <property type="term" value="P:phospholipid biosynthetic process"/>
    <property type="evidence" value="ECO:0007669"/>
    <property type="project" value="UniProtKB-KW"/>
</dbReference>
<dbReference type="Gene3D" id="3.40.718.10">
    <property type="entry name" value="Isopropylmalate Dehydrogenase"/>
    <property type="match status" value="1"/>
</dbReference>
<dbReference type="HAMAP" id="MF_00019">
    <property type="entry name" value="PlsX"/>
    <property type="match status" value="1"/>
</dbReference>
<dbReference type="InterPro" id="IPR003664">
    <property type="entry name" value="FA_synthesis"/>
</dbReference>
<dbReference type="InterPro" id="IPR012281">
    <property type="entry name" value="Phospholipid_synth_PlsX-like"/>
</dbReference>
<dbReference type="NCBIfam" id="TIGR00182">
    <property type="entry name" value="plsX"/>
    <property type="match status" value="1"/>
</dbReference>
<dbReference type="PANTHER" id="PTHR30100">
    <property type="entry name" value="FATTY ACID/PHOSPHOLIPID SYNTHESIS PROTEIN PLSX"/>
    <property type="match status" value="1"/>
</dbReference>
<dbReference type="PANTHER" id="PTHR30100:SF1">
    <property type="entry name" value="PHOSPHATE ACYLTRANSFERASE"/>
    <property type="match status" value="1"/>
</dbReference>
<dbReference type="Pfam" id="PF02504">
    <property type="entry name" value="FA_synthesis"/>
    <property type="match status" value="1"/>
</dbReference>
<dbReference type="PIRSF" id="PIRSF002465">
    <property type="entry name" value="Phsphlp_syn_PlsX"/>
    <property type="match status" value="1"/>
</dbReference>
<dbReference type="SUPFAM" id="SSF53659">
    <property type="entry name" value="Isocitrate/Isopropylmalate dehydrogenase-like"/>
    <property type="match status" value="1"/>
</dbReference>
<evidence type="ECO:0000255" key="1">
    <source>
        <dbReference type="HAMAP-Rule" id="MF_00019"/>
    </source>
</evidence>
<name>PLSX_CLOBA</name>
<gene>
    <name evidence="1" type="primary">plsX</name>
    <name type="ordered locus">CLH_1189</name>
</gene>
<comment type="function">
    <text evidence="1">Catalyzes the reversible formation of acyl-phosphate (acyl-PO(4)) from acyl-[acyl-carrier-protein] (acyl-ACP). This enzyme utilizes acyl-ACP as fatty acyl donor, but not acyl-CoA.</text>
</comment>
<comment type="catalytic activity">
    <reaction evidence="1">
        <text>a fatty acyl-[ACP] + phosphate = an acyl phosphate + holo-[ACP]</text>
        <dbReference type="Rhea" id="RHEA:42292"/>
        <dbReference type="Rhea" id="RHEA-COMP:9685"/>
        <dbReference type="Rhea" id="RHEA-COMP:14125"/>
        <dbReference type="ChEBI" id="CHEBI:43474"/>
        <dbReference type="ChEBI" id="CHEBI:59918"/>
        <dbReference type="ChEBI" id="CHEBI:64479"/>
        <dbReference type="ChEBI" id="CHEBI:138651"/>
        <dbReference type="EC" id="2.3.1.274"/>
    </reaction>
</comment>
<comment type="pathway">
    <text evidence="1">Lipid metabolism; phospholipid metabolism.</text>
</comment>
<comment type="subunit">
    <text evidence="1">Homodimer. Probably interacts with PlsY.</text>
</comment>
<comment type="subcellular location">
    <subcellularLocation>
        <location evidence="1">Cytoplasm</location>
    </subcellularLocation>
    <text evidence="1">Associated with the membrane possibly through PlsY.</text>
</comment>
<comment type="similarity">
    <text evidence="1">Belongs to the PlsX family.</text>
</comment>
<sequence>MKIAIDGMGGDNAPSAVVEGVVSALKEYSEMTFYITGPEDKISLELSKYDYPKDKIIIIDAKEVISTNEHPVMALRRKKDSSIVKALNLVKDAHCDGIISAGSTGAFLAGCTLIVGRIKGVERPALGPIMPGRRGNFMIVDAGANVDSKPEYLVQFSKMGSIYYKNVFNVDIPSVGLLNIGAEEEKGNDLTKATYKLLKEENSINFVGNIEPRYIPTGDTNIIVSDGFAGNTALKMYEGSAKNILGMIKDEVLKADLKSKIGVLLLKPFLKRIMKKFDYKEYGGAPFLGVNGICIKAHGSSDGKAFKNAIRQTKIFYENNVLDEIKKEFEKKN</sequence>
<organism>
    <name type="scientific">Clostridium botulinum (strain Alaska E43 / Type E3)</name>
    <dbReference type="NCBI Taxonomy" id="508767"/>
    <lineage>
        <taxon>Bacteria</taxon>
        <taxon>Bacillati</taxon>
        <taxon>Bacillota</taxon>
        <taxon>Clostridia</taxon>
        <taxon>Eubacteriales</taxon>
        <taxon>Clostridiaceae</taxon>
        <taxon>Clostridium</taxon>
    </lineage>
</organism>
<protein>
    <recommendedName>
        <fullName evidence="1">Phosphate acyltransferase</fullName>
        <ecNumber evidence="1">2.3.1.274</ecNumber>
    </recommendedName>
    <alternativeName>
        <fullName evidence="1">Acyl-ACP phosphotransacylase</fullName>
    </alternativeName>
    <alternativeName>
        <fullName evidence="1">Acyl-[acyl-carrier-protein]--phosphate acyltransferase</fullName>
    </alternativeName>
    <alternativeName>
        <fullName evidence="1">Phosphate-acyl-ACP acyltransferase</fullName>
    </alternativeName>
</protein>
<proteinExistence type="inferred from homology"/>
<feature type="chain" id="PRO_1000089891" description="Phosphate acyltransferase">
    <location>
        <begin position="1"/>
        <end position="333"/>
    </location>
</feature>
<accession>B2V4D4</accession>